<gene>
    <name type="ordered locus">VS_1049</name>
</gene>
<evidence type="ECO:0000255" key="1">
    <source>
        <dbReference type="HAMAP-Rule" id="MF_00762"/>
    </source>
</evidence>
<feature type="chain" id="PRO_1000148420" description="UPF0304 protein VS_1049">
    <location>
        <begin position="1"/>
        <end position="166"/>
    </location>
</feature>
<protein>
    <recommendedName>
        <fullName evidence="1">UPF0304 protein VS_1049</fullName>
    </recommendedName>
</protein>
<comment type="similarity">
    <text evidence="1">Belongs to the UPF0304 family.</text>
</comment>
<reference key="1">
    <citation type="submission" date="2009-02" db="EMBL/GenBank/DDBJ databases">
        <title>Vibrio splendidus str. LGP32 complete genome.</title>
        <authorList>
            <person name="Mazel D."/>
            <person name="Le Roux F."/>
        </authorList>
    </citation>
    <scope>NUCLEOTIDE SEQUENCE [LARGE SCALE GENOMIC DNA]</scope>
    <source>
        <strain>LGP32</strain>
    </source>
</reference>
<organism>
    <name type="scientific">Vibrio atlanticus (strain LGP32)</name>
    <name type="common">Vibrio splendidus (strain Mel32)</name>
    <dbReference type="NCBI Taxonomy" id="575788"/>
    <lineage>
        <taxon>Bacteria</taxon>
        <taxon>Pseudomonadati</taxon>
        <taxon>Pseudomonadota</taxon>
        <taxon>Gammaproteobacteria</taxon>
        <taxon>Vibrionales</taxon>
        <taxon>Vibrionaceae</taxon>
        <taxon>Vibrio</taxon>
    </lineage>
</organism>
<sequence length="166" mass="19884">MEMTNAQRLILSNQYYLMSQMDPENSAKYQRLQTIVERGYELQMRELNKEFGCLTEAECREIIDIMEMYHAMQESNKMLADQERAEVDQRRLQFLGFDIASEAQIVHYVRFLVDSEGLYPQFDKADHHFNSQMPMLEKYRRMLTTWRNCPRQYHLCATELSQIFSA</sequence>
<proteinExistence type="inferred from homology"/>
<dbReference type="EMBL" id="FM954972">
    <property type="protein sequence ID" value="CAV18126.1"/>
    <property type="molecule type" value="Genomic_DNA"/>
</dbReference>
<dbReference type="SMR" id="B7VM08"/>
<dbReference type="STRING" id="575788.VS_1049"/>
<dbReference type="KEGG" id="vsp:VS_1049"/>
<dbReference type="eggNOG" id="COG3013">
    <property type="taxonomic scope" value="Bacteria"/>
</dbReference>
<dbReference type="HOGENOM" id="CLU_101021_1_0_6"/>
<dbReference type="Proteomes" id="UP000009100">
    <property type="component" value="Chromosome 1"/>
</dbReference>
<dbReference type="Gene3D" id="1.10.287.680">
    <property type="entry name" value="Helix hairpin bin"/>
    <property type="match status" value="1"/>
</dbReference>
<dbReference type="Gene3D" id="1.10.3190.10">
    <property type="entry name" value="yfbu gene product, domain 2"/>
    <property type="match status" value="1"/>
</dbReference>
<dbReference type="HAMAP" id="MF_00762">
    <property type="entry name" value="UPF0304"/>
    <property type="match status" value="1"/>
</dbReference>
<dbReference type="InterPro" id="IPR005587">
    <property type="entry name" value="UPF0304_YfbU"/>
</dbReference>
<dbReference type="InterPro" id="IPR023146">
    <property type="entry name" value="YfbU_alpha-helical_sf"/>
</dbReference>
<dbReference type="InterPro" id="IPR023145">
    <property type="entry name" value="YfbU_helix-hairpin_sf"/>
</dbReference>
<dbReference type="NCBIfam" id="NF003936">
    <property type="entry name" value="PRK05445.1"/>
    <property type="match status" value="1"/>
</dbReference>
<dbReference type="Pfam" id="PF03887">
    <property type="entry name" value="YfbU"/>
    <property type="match status" value="1"/>
</dbReference>
<dbReference type="PIRSF" id="PIRSF006272">
    <property type="entry name" value="UCP006272"/>
    <property type="match status" value="1"/>
</dbReference>
<dbReference type="SUPFAM" id="SSF116960">
    <property type="entry name" value="YfbU-like"/>
    <property type="match status" value="1"/>
</dbReference>
<accession>B7VM08</accession>
<name>Y1049_VIBA3</name>